<name>HPRT_METKA</name>
<proteinExistence type="inferred from homology"/>
<protein>
    <recommendedName>
        <fullName evidence="1">Hypoxanthine/guanine phosphoribosyltransferase</fullName>
        <shortName evidence="1">HGPRTase</shortName>
        <ecNumber evidence="1">2.4.2.8</ecNumber>
    </recommendedName>
</protein>
<gene>
    <name evidence="1" type="primary">hpt</name>
    <name type="ordered locus">MK0610</name>
</gene>
<sequence>MLLEKSLEEAPVVNRNGYWYFIHPITDGVPELPPELLREVAYRIVRALDSTDFDKIVCVEAMGIHLGALLSDMLDRPLVIVRKREYGLDGEVEITQEKGYGVEKLYLNGVSEGDRVVVVDDVISTGGTLVGLINALDDVGAEIEDVVVVVARGGLDRVREETGVDVKYLVRVEVSEDGVSVVESRYR</sequence>
<accession>Q8TXQ0</accession>
<evidence type="ECO:0000255" key="1">
    <source>
        <dbReference type="HAMAP-Rule" id="MF_01467"/>
    </source>
</evidence>
<organism>
    <name type="scientific">Methanopyrus kandleri (strain AV19 / DSM 6324 / JCM 9639 / NBRC 100938)</name>
    <dbReference type="NCBI Taxonomy" id="190192"/>
    <lineage>
        <taxon>Archaea</taxon>
        <taxon>Methanobacteriati</taxon>
        <taxon>Methanobacteriota</taxon>
        <taxon>Methanomada group</taxon>
        <taxon>Methanopyri</taxon>
        <taxon>Methanopyrales</taxon>
        <taxon>Methanopyraceae</taxon>
        <taxon>Methanopyrus</taxon>
    </lineage>
</organism>
<feature type="chain" id="PRO_0000149497" description="Hypoxanthine/guanine phosphoribosyltransferase">
    <location>
        <begin position="1"/>
        <end position="187"/>
    </location>
</feature>
<comment type="function">
    <text evidence="1">Catalyzes a salvage reaction resulting in the formation of IMP that is energically less costly than de novo synthesis.</text>
</comment>
<comment type="catalytic activity">
    <reaction evidence="1">
        <text>IMP + diphosphate = hypoxanthine + 5-phospho-alpha-D-ribose 1-diphosphate</text>
        <dbReference type="Rhea" id="RHEA:17973"/>
        <dbReference type="ChEBI" id="CHEBI:17368"/>
        <dbReference type="ChEBI" id="CHEBI:33019"/>
        <dbReference type="ChEBI" id="CHEBI:58017"/>
        <dbReference type="ChEBI" id="CHEBI:58053"/>
        <dbReference type="EC" id="2.4.2.8"/>
    </reaction>
</comment>
<comment type="catalytic activity">
    <reaction evidence="1">
        <text>GMP + diphosphate = guanine + 5-phospho-alpha-D-ribose 1-diphosphate</text>
        <dbReference type="Rhea" id="RHEA:25424"/>
        <dbReference type="ChEBI" id="CHEBI:16235"/>
        <dbReference type="ChEBI" id="CHEBI:33019"/>
        <dbReference type="ChEBI" id="CHEBI:58017"/>
        <dbReference type="ChEBI" id="CHEBI:58115"/>
        <dbReference type="EC" id="2.4.2.8"/>
    </reaction>
</comment>
<comment type="pathway">
    <text evidence="1">Purine metabolism; IMP biosynthesis via salvage pathway; IMP from hypoxanthine: step 1/1.</text>
</comment>
<comment type="subunit">
    <text evidence="1">Homodimer.</text>
</comment>
<comment type="subcellular location">
    <subcellularLocation>
        <location>Cytoplasm</location>
    </subcellularLocation>
</comment>
<comment type="similarity">
    <text evidence="1">Belongs to the purine/pyrimidine phosphoribosyltransferase family. Archaeal HPRT subfamily.</text>
</comment>
<keyword id="KW-0963">Cytoplasm</keyword>
<keyword id="KW-0328">Glycosyltransferase</keyword>
<keyword id="KW-0660">Purine salvage</keyword>
<keyword id="KW-1185">Reference proteome</keyword>
<keyword id="KW-0808">Transferase</keyword>
<dbReference type="EC" id="2.4.2.8" evidence="1"/>
<dbReference type="EMBL" id="AE009439">
    <property type="protein sequence ID" value="AAM01825.1"/>
    <property type="molecule type" value="Genomic_DNA"/>
</dbReference>
<dbReference type="RefSeq" id="WP_011018980.1">
    <property type="nucleotide sequence ID" value="NC_003551.1"/>
</dbReference>
<dbReference type="SMR" id="Q8TXQ0"/>
<dbReference type="FunCoup" id="Q8TXQ0">
    <property type="interactions" value="48"/>
</dbReference>
<dbReference type="STRING" id="190192.MK0610"/>
<dbReference type="PaxDb" id="190192-MK0610"/>
<dbReference type="EnsemblBacteria" id="AAM01825">
    <property type="protein sequence ID" value="AAM01825"/>
    <property type="gene ID" value="MK0610"/>
</dbReference>
<dbReference type="GeneID" id="1476711"/>
<dbReference type="KEGG" id="mka:MK0610"/>
<dbReference type="PATRIC" id="fig|190192.8.peg.647"/>
<dbReference type="HOGENOM" id="CLU_126376_0_0_2"/>
<dbReference type="InParanoid" id="Q8TXQ0"/>
<dbReference type="OrthoDB" id="8323at2157"/>
<dbReference type="UniPathway" id="UPA00591">
    <property type="reaction ID" value="UER00648"/>
</dbReference>
<dbReference type="Proteomes" id="UP000001826">
    <property type="component" value="Chromosome"/>
</dbReference>
<dbReference type="GO" id="GO:0005737">
    <property type="term" value="C:cytoplasm"/>
    <property type="evidence" value="ECO:0007669"/>
    <property type="project" value="UniProtKB-SubCell"/>
</dbReference>
<dbReference type="GO" id="GO:0052657">
    <property type="term" value="F:guanine phosphoribosyltransferase activity"/>
    <property type="evidence" value="ECO:0007669"/>
    <property type="project" value="RHEA"/>
</dbReference>
<dbReference type="GO" id="GO:0004422">
    <property type="term" value="F:hypoxanthine phosphoribosyltransferase activity"/>
    <property type="evidence" value="ECO:0007669"/>
    <property type="project" value="UniProtKB-UniRule"/>
</dbReference>
<dbReference type="GO" id="GO:0032264">
    <property type="term" value="P:IMP salvage"/>
    <property type="evidence" value="ECO:0007669"/>
    <property type="project" value="UniProtKB-UniRule"/>
</dbReference>
<dbReference type="GO" id="GO:0006166">
    <property type="term" value="P:purine ribonucleoside salvage"/>
    <property type="evidence" value="ECO:0007669"/>
    <property type="project" value="UniProtKB-KW"/>
</dbReference>
<dbReference type="CDD" id="cd06223">
    <property type="entry name" value="PRTases_typeI"/>
    <property type="match status" value="1"/>
</dbReference>
<dbReference type="Gene3D" id="3.40.50.2020">
    <property type="match status" value="1"/>
</dbReference>
<dbReference type="HAMAP" id="MF_01467">
    <property type="entry name" value="Hypx_phosphoribosyltr"/>
    <property type="match status" value="1"/>
</dbReference>
<dbReference type="InterPro" id="IPR026597">
    <property type="entry name" value="HGPRTase-like"/>
</dbReference>
<dbReference type="InterPro" id="IPR000836">
    <property type="entry name" value="PRibTrfase_dom"/>
</dbReference>
<dbReference type="InterPro" id="IPR029057">
    <property type="entry name" value="PRTase-like"/>
</dbReference>
<dbReference type="InterPro" id="IPR050118">
    <property type="entry name" value="Pur/Pyrimidine_PRTase"/>
</dbReference>
<dbReference type="NCBIfam" id="NF040646">
    <property type="entry name" value="HPT_Archaea"/>
    <property type="match status" value="1"/>
</dbReference>
<dbReference type="NCBIfam" id="NF002635">
    <property type="entry name" value="PRK02304.1-4"/>
    <property type="match status" value="1"/>
</dbReference>
<dbReference type="PANTHER" id="PTHR43864">
    <property type="entry name" value="HYPOXANTHINE/GUANINE PHOSPHORIBOSYLTRANSFERASE"/>
    <property type="match status" value="1"/>
</dbReference>
<dbReference type="PANTHER" id="PTHR43864:SF1">
    <property type="entry name" value="XANTHINE PHOSPHORIBOSYLTRANSFERASE"/>
    <property type="match status" value="1"/>
</dbReference>
<dbReference type="Pfam" id="PF00156">
    <property type="entry name" value="Pribosyltran"/>
    <property type="match status" value="1"/>
</dbReference>
<dbReference type="SUPFAM" id="SSF53271">
    <property type="entry name" value="PRTase-like"/>
    <property type="match status" value="1"/>
</dbReference>
<dbReference type="PROSITE" id="PS00103">
    <property type="entry name" value="PUR_PYR_PR_TRANSFER"/>
    <property type="match status" value="1"/>
</dbReference>
<reference key="1">
    <citation type="journal article" date="2002" name="Proc. Natl. Acad. Sci. U.S.A.">
        <title>The complete genome of hyperthermophile Methanopyrus kandleri AV19 and monophyly of archaeal methanogens.</title>
        <authorList>
            <person name="Slesarev A.I."/>
            <person name="Mezhevaya K.V."/>
            <person name="Makarova K.S."/>
            <person name="Polushin N.N."/>
            <person name="Shcherbinina O.V."/>
            <person name="Shakhova V.V."/>
            <person name="Belova G.I."/>
            <person name="Aravind L."/>
            <person name="Natale D.A."/>
            <person name="Rogozin I.B."/>
            <person name="Tatusov R.L."/>
            <person name="Wolf Y.I."/>
            <person name="Stetter K.O."/>
            <person name="Malykh A.G."/>
            <person name="Koonin E.V."/>
            <person name="Kozyavkin S.A."/>
        </authorList>
    </citation>
    <scope>NUCLEOTIDE SEQUENCE [LARGE SCALE GENOMIC DNA]</scope>
    <source>
        <strain>AV19 / DSM 6324 / JCM 9639 / NBRC 100938</strain>
    </source>
</reference>